<name>HSLO_HALH5</name>
<sequence length="291" mass="31311">MGDYLVKALGFEGKVRAYALKATEMVNEAVRRQDTWPTASAALGRTMMAGTMMAAMLKGDAKLTVKVEGDGPIGAIIVDSQANGQTRGYVKNPHVHFELNEHGKLDVARAVGTNGSLSVVKDIGLRDHFTGSVPLVSGELGEDFTYYFVSSEQTPSSVGVGVLVNPDNSVLAAGGFVLQLMPGADDAIISEIEKRLQTIPPISKLVEAGMPPEEILAALLGDDNVKILEKMPIEFACQCSKERIARAIISLGKDEIRAMIEEDGGAETTCHFCNEVYLFSKEELETLYEEA</sequence>
<evidence type="ECO:0000255" key="1">
    <source>
        <dbReference type="HAMAP-Rule" id="MF_00117"/>
    </source>
</evidence>
<feature type="chain" id="PRO_0000192165" description="33 kDa chaperonin">
    <location>
        <begin position="1"/>
        <end position="291"/>
    </location>
</feature>
<feature type="disulfide bond" description="Redox-active" evidence="1">
    <location>
        <begin position="237"/>
        <end position="239"/>
    </location>
</feature>
<feature type="disulfide bond" description="Redox-active" evidence="1">
    <location>
        <begin position="270"/>
        <end position="273"/>
    </location>
</feature>
<accession>Q9KGH4</accession>
<comment type="function">
    <text evidence="1">Redox regulated molecular chaperone. Protects both thermally unfolding and oxidatively damaged proteins from irreversible aggregation. Plays an important role in the bacterial defense system toward oxidative stress.</text>
</comment>
<comment type="subcellular location">
    <subcellularLocation>
        <location evidence="1">Cytoplasm</location>
    </subcellularLocation>
</comment>
<comment type="PTM">
    <text evidence="1">Under oxidizing conditions two disulfide bonds are formed involving the reactive cysteines. Under reducing conditions zinc is bound to the reactive cysteines and the protein is inactive.</text>
</comment>
<comment type="similarity">
    <text evidence="1">Belongs to the HSP33 family.</text>
</comment>
<reference key="1">
    <citation type="journal article" date="2000" name="Nucleic Acids Res.">
        <title>Complete genome sequence of the alkaliphilic bacterium Bacillus halodurans and genomic sequence comparison with Bacillus subtilis.</title>
        <authorList>
            <person name="Takami H."/>
            <person name="Nakasone K."/>
            <person name="Takaki Y."/>
            <person name="Maeno G."/>
            <person name="Sasaki R."/>
            <person name="Masui N."/>
            <person name="Fuji F."/>
            <person name="Hirama C."/>
            <person name="Nakamura Y."/>
            <person name="Ogasawara N."/>
            <person name="Kuhara S."/>
            <person name="Horikoshi K."/>
        </authorList>
    </citation>
    <scope>NUCLEOTIDE SEQUENCE [LARGE SCALE GENOMIC DNA]</scope>
    <source>
        <strain>ATCC BAA-125 / DSM 18197 / FERM 7344 / JCM 9153 / C-125</strain>
    </source>
</reference>
<organism>
    <name type="scientific">Halalkalibacterium halodurans (strain ATCC BAA-125 / DSM 18197 / FERM 7344 / JCM 9153 / C-125)</name>
    <name type="common">Bacillus halodurans</name>
    <dbReference type="NCBI Taxonomy" id="272558"/>
    <lineage>
        <taxon>Bacteria</taxon>
        <taxon>Bacillati</taxon>
        <taxon>Bacillota</taxon>
        <taxon>Bacilli</taxon>
        <taxon>Bacillales</taxon>
        <taxon>Bacillaceae</taxon>
        <taxon>Halalkalibacterium (ex Joshi et al. 2022)</taxon>
    </lineage>
</organism>
<protein>
    <recommendedName>
        <fullName evidence="1">33 kDa chaperonin</fullName>
    </recommendedName>
    <alternativeName>
        <fullName evidence="1">Heat shock protein 33 homolog</fullName>
        <shortName evidence="1">HSP33</shortName>
    </alternativeName>
</protein>
<gene>
    <name evidence="1" type="primary">hslO</name>
    <name type="ordered locus">BH0087</name>
</gene>
<keyword id="KW-0143">Chaperone</keyword>
<keyword id="KW-0963">Cytoplasm</keyword>
<keyword id="KW-1015">Disulfide bond</keyword>
<keyword id="KW-0676">Redox-active center</keyword>
<keyword id="KW-1185">Reference proteome</keyword>
<keyword id="KW-0862">Zinc</keyword>
<dbReference type="EMBL" id="BA000004">
    <property type="protein sequence ID" value="BAB03806.1"/>
    <property type="molecule type" value="Genomic_DNA"/>
</dbReference>
<dbReference type="PIR" id="G83660">
    <property type="entry name" value="G83660"/>
</dbReference>
<dbReference type="RefSeq" id="WP_010896271.1">
    <property type="nucleotide sequence ID" value="NC_002570.2"/>
</dbReference>
<dbReference type="SMR" id="Q9KGH4"/>
<dbReference type="STRING" id="272558.gene:10725910"/>
<dbReference type="GeneID" id="87595612"/>
<dbReference type="KEGG" id="bha:BH0087"/>
<dbReference type="eggNOG" id="COG1281">
    <property type="taxonomic scope" value="Bacteria"/>
</dbReference>
<dbReference type="HOGENOM" id="CLU_054493_1_0_9"/>
<dbReference type="OrthoDB" id="9776534at2"/>
<dbReference type="Proteomes" id="UP000001258">
    <property type="component" value="Chromosome"/>
</dbReference>
<dbReference type="GO" id="GO:0005737">
    <property type="term" value="C:cytoplasm"/>
    <property type="evidence" value="ECO:0007669"/>
    <property type="project" value="UniProtKB-SubCell"/>
</dbReference>
<dbReference type="GO" id="GO:0044183">
    <property type="term" value="F:protein folding chaperone"/>
    <property type="evidence" value="ECO:0007669"/>
    <property type="project" value="TreeGrafter"/>
</dbReference>
<dbReference type="GO" id="GO:0051082">
    <property type="term" value="F:unfolded protein binding"/>
    <property type="evidence" value="ECO:0007669"/>
    <property type="project" value="UniProtKB-UniRule"/>
</dbReference>
<dbReference type="GO" id="GO:0042026">
    <property type="term" value="P:protein refolding"/>
    <property type="evidence" value="ECO:0007669"/>
    <property type="project" value="TreeGrafter"/>
</dbReference>
<dbReference type="CDD" id="cd00498">
    <property type="entry name" value="Hsp33"/>
    <property type="match status" value="1"/>
</dbReference>
<dbReference type="Gene3D" id="3.55.30.10">
    <property type="entry name" value="Hsp33 domain"/>
    <property type="match status" value="1"/>
</dbReference>
<dbReference type="Gene3D" id="3.90.1280.10">
    <property type="entry name" value="HSP33 redox switch-like"/>
    <property type="match status" value="1"/>
</dbReference>
<dbReference type="HAMAP" id="MF_00117">
    <property type="entry name" value="HslO"/>
    <property type="match status" value="1"/>
</dbReference>
<dbReference type="InterPro" id="IPR000397">
    <property type="entry name" value="Heat_shock_Hsp33"/>
</dbReference>
<dbReference type="InterPro" id="IPR016154">
    <property type="entry name" value="Heat_shock_Hsp33_C"/>
</dbReference>
<dbReference type="InterPro" id="IPR016153">
    <property type="entry name" value="Heat_shock_Hsp33_N"/>
</dbReference>
<dbReference type="NCBIfam" id="NF001033">
    <property type="entry name" value="PRK00114.1"/>
    <property type="match status" value="1"/>
</dbReference>
<dbReference type="PANTHER" id="PTHR30111">
    <property type="entry name" value="33 KDA CHAPERONIN"/>
    <property type="match status" value="1"/>
</dbReference>
<dbReference type="PANTHER" id="PTHR30111:SF1">
    <property type="entry name" value="33 KDA CHAPERONIN"/>
    <property type="match status" value="1"/>
</dbReference>
<dbReference type="Pfam" id="PF01430">
    <property type="entry name" value="HSP33"/>
    <property type="match status" value="1"/>
</dbReference>
<dbReference type="PIRSF" id="PIRSF005261">
    <property type="entry name" value="Heat_shock_Hsp33"/>
    <property type="match status" value="1"/>
</dbReference>
<dbReference type="SUPFAM" id="SSF64397">
    <property type="entry name" value="Hsp33 domain"/>
    <property type="match status" value="1"/>
</dbReference>
<dbReference type="SUPFAM" id="SSF118352">
    <property type="entry name" value="HSP33 redox switch-like"/>
    <property type="match status" value="1"/>
</dbReference>
<proteinExistence type="inferred from homology"/>